<name>PDXT_SACI6</name>
<reference key="1">
    <citation type="journal article" date="2009" name="Proc. Natl. Acad. Sci. U.S.A.">
        <title>Biogeography of the Sulfolobus islandicus pan-genome.</title>
        <authorList>
            <person name="Reno M.L."/>
            <person name="Held N.L."/>
            <person name="Fields C.J."/>
            <person name="Burke P.V."/>
            <person name="Whitaker R.J."/>
        </authorList>
    </citation>
    <scope>NUCLEOTIDE SEQUENCE [LARGE SCALE GENOMIC DNA]</scope>
    <source>
        <strain>M.16.4 / Kamchatka #3</strain>
    </source>
</reference>
<comment type="function">
    <text evidence="1">Catalyzes the hydrolysis of glutamine to glutamate and ammonia as part of the biosynthesis of pyridoxal 5'-phosphate. The resulting ammonia molecule is channeled to the active site of PdxS.</text>
</comment>
<comment type="catalytic activity">
    <reaction evidence="1">
        <text>aldehydo-D-ribose 5-phosphate + D-glyceraldehyde 3-phosphate + L-glutamine = pyridoxal 5'-phosphate + L-glutamate + phosphate + 3 H2O + H(+)</text>
        <dbReference type="Rhea" id="RHEA:31507"/>
        <dbReference type="ChEBI" id="CHEBI:15377"/>
        <dbReference type="ChEBI" id="CHEBI:15378"/>
        <dbReference type="ChEBI" id="CHEBI:29985"/>
        <dbReference type="ChEBI" id="CHEBI:43474"/>
        <dbReference type="ChEBI" id="CHEBI:58273"/>
        <dbReference type="ChEBI" id="CHEBI:58359"/>
        <dbReference type="ChEBI" id="CHEBI:59776"/>
        <dbReference type="ChEBI" id="CHEBI:597326"/>
        <dbReference type="EC" id="4.3.3.6"/>
    </reaction>
</comment>
<comment type="catalytic activity">
    <reaction evidence="1">
        <text>L-glutamine + H2O = L-glutamate + NH4(+)</text>
        <dbReference type="Rhea" id="RHEA:15889"/>
        <dbReference type="ChEBI" id="CHEBI:15377"/>
        <dbReference type="ChEBI" id="CHEBI:28938"/>
        <dbReference type="ChEBI" id="CHEBI:29985"/>
        <dbReference type="ChEBI" id="CHEBI:58359"/>
        <dbReference type="EC" id="3.5.1.2"/>
    </reaction>
</comment>
<comment type="pathway">
    <text evidence="1">Cofactor biosynthesis; pyridoxal 5'-phosphate biosynthesis.</text>
</comment>
<comment type="subunit">
    <text evidence="1">In the presence of PdxS, forms a dodecamer of heterodimers. Only shows activity in the heterodimer.</text>
</comment>
<comment type="similarity">
    <text evidence="1">Belongs to the glutaminase PdxT/SNO family.</text>
</comment>
<keyword id="KW-0315">Glutamine amidotransferase</keyword>
<keyword id="KW-0378">Hydrolase</keyword>
<keyword id="KW-0456">Lyase</keyword>
<keyword id="KW-0663">Pyridoxal phosphate</keyword>
<gene>
    <name evidence="1" type="primary">pdxT</name>
    <name type="ordered locus">M164_1555</name>
</gene>
<sequence length="200" mass="21720">MKIGIIAYQGSFEEHYLQLKRAFDKLSINGEITPVKIPKDLKDIDGVIIPGGESTTIGLVAKRLGILDELKEKITSGLPVMGTCAGAIMLAKEVSDAKVGKTSQPLIGAMNISIIRNYYGRQRESFEAIIDLSKIGKGKANVVFIRAPAITKLWGKAQSLAELNGVTVLAEENNILATTFHPELSDTTSIHEYFLHLVKG</sequence>
<protein>
    <recommendedName>
        <fullName evidence="1">Pyridoxal 5'-phosphate synthase subunit PdxT</fullName>
        <ecNumber evidence="1">4.3.3.6</ecNumber>
    </recommendedName>
    <alternativeName>
        <fullName evidence="1">Pdx2</fullName>
    </alternativeName>
    <alternativeName>
        <fullName evidence="1">Pyridoxal 5'-phosphate synthase glutaminase subunit</fullName>
        <ecNumber evidence="1">3.5.1.2</ecNumber>
    </alternativeName>
</protein>
<organism>
    <name type="scientific">Saccharolobus islandicus (strain M.16.4 / Kamchatka #3)</name>
    <name type="common">Sulfolobus islandicus</name>
    <dbReference type="NCBI Taxonomy" id="426118"/>
    <lineage>
        <taxon>Archaea</taxon>
        <taxon>Thermoproteota</taxon>
        <taxon>Thermoprotei</taxon>
        <taxon>Sulfolobales</taxon>
        <taxon>Sulfolobaceae</taxon>
        <taxon>Saccharolobus</taxon>
    </lineage>
</organism>
<evidence type="ECO:0000255" key="1">
    <source>
        <dbReference type="HAMAP-Rule" id="MF_01615"/>
    </source>
</evidence>
<accession>C4KHU2</accession>
<feature type="chain" id="PRO_1000215722" description="Pyridoxal 5'-phosphate synthase subunit PdxT">
    <location>
        <begin position="1"/>
        <end position="200"/>
    </location>
</feature>
<feature type="active site" description="Nucleophile" evidence="1">
    <location>
        <position position="84"/>
    </location>
</feature>
<feature type="active site" description="Charge relay system" evidence="1">
    <location>
        <position position="181"/>
    </location>
</feature>
<feature type="active site" description="Charge relay system" evidence="1">
    <location>
        <position position="183"/>
    </location>
</feature>
<feature type="binding site" evidence="1">
    <location>
        <begin position="52"/>
        <end position="54"/>
    </location>
    <ligand>
        <name>L-glutamine</name>
        <dbReference type="ChEBI" id="CHEBI:58359"/>
    </ligand>
</feature>
<feature type="binding site" evidence="1">
    <location>
        <position position="116"/>
    </location>
    <ligand>
        <name>L-glutamine</name>
        <dbReference type="ChEBI" id="CHEBI:58359"/>
    </ligand>
</feature>
<feature type="binding site" evidence="1">
    <location>
        <begin position="145"/>
        <end position="146"/>
    </location>
    <ligand>
        <name>L-glutamine</name>
        <dbReference type="ChEBI" id="CHEBI:58359"/>
    </ligand>
</feature>
<proteinExistence type="inferred from homology"/>
<dbReference type="EC" id="4.3.3.6" evidence="1"/>
<dbReference type="EC" id="3.5.1.2" evidence="1"/>
<dbReference type="EMBL" id="CP001402">
    <property type="protein sequence ID" value="ACR42156.1"/>
    <property type="molecule type" value="Genomic_DNA"/>
</dbReference>
<dbReference type="RefSeq" id="WP_012711552.1">
    <property type="nucleotide sequence ID" value="NC_012726.1"/>
</dbReference>
<dbReference type="SMR" id="C4KHU2"/>
<dbReference type="MEROPS" id="C26.A32"/>
<dbReference type="GeneID" id="84061869"/>
<dbReference type="KEGG" id="sid:M164_1555"/>
<dbReference type="HOGENOM" id="CLU_069674_2_0_2"/>
<dbReference type="UniPathway" id="UPA00245"/>
<dbReference type="Proteomes" id="UP000001479">
    <property type="component" value="Chromosome"/>
</dbReference>
<dbReference type="GO" id="GO:0005829">
    <property type="term" value="C:cytosol"/>
    <property type="evidence" value="ECO:0007669"/>
    <property type="project" value="TreeGrafter"/>
</dbReference>
<dbReference type="GO" id="GO:1903600">
    <property type="term" value="C:glutaminase complex"/>
    <property type="evidence" value="ECO:0007669"/>
    <property type="project" value="TreeGrafter"/>
</dbReference>
<dbReference type="GO" id="GO:0004359">
    <property type="term" value="F:glutaminase activity"/>
    <property type="evidence" value="ECO:0007669"/>
    <property type="project" value="UniProtKB-UniRule"/>
</dbReference>
<dbReference type="GO" id="GO:0036381">
    <property type="term" value="F:pyridoxal 5'-phosphate synthase (glutamine hydrolysing) activity"/>
    <property type="evidence" value="ECO:0007669"/>
    <property type="project" value="UniProtKB-UniRule"/>
</dbReference>
<dbReference type="GO" id="GO:0006543">
    <property type="term" value="P:glutamine catabolic process"/>
    <property type="evidence" value="ECO:0007669"/>
    <property type="project" value="UniProtKB-UniRule"/>
</dbReference>
<dbReference type="GO" id="GO:0042823">
    <property type="term" value="P:pyridoxal phosphate biosynthetic process"/>
    <property type="evidence" value="ECO:0007669"/>
    <property type="project" value="UniProtKB-UniRule"/>
</dbReference>
<dbReference type="GO" id="GO:0008614">
    <property type="term" value="P:pyridoxine metabolic process"/>
    <property type="evidence" value="ECO:0007669"/>
    <property type="project" value="TreeGrafter"/>
</dbReference>
<dbReference type="CDD" id="cd01749">
    <property type="entry name" value="GATase1_PB"/>
    <property type="match status" value="1"/>
</dbReference>
<dbReference type="FunFam" id="3.40.50.880:FF:000041">
    <property type="entry name" value="Glutamine amidotransferase subunit pdxT, putative"/>
    <property type="match status" value="1"/>
</dbReference>
<dbReference type="Gene3D" id="3.40.50.880">
    <property type="match status" value="1"/>
</dbReference>
<dbReference type="HAMAP" id="MF_01615">
    <property type="entry name" value="PdxT"/>
    <property type="match status" value="1"/>
</dbReference>
<dbReference type="InterPro" id="IPR029062">
    <property type="entry name" value="Class_I_gatase-like"/>
</dbReference>
<dbReference type="InterPro" id="IPR002161">
    <property type="entry name" value="PdxT/SNO"/>
</dbReference>
<dbReference type="InterPro" id="IPR021196">
    <property type="entry name" value="PdxT/SNO_CS"/>
</dbReference>
<dbReference type="NCBIfam" id="TIGR03800">
    <property type="entry name" value="PLP_synth_Pdx2"/>
    <property type="match status" value="1"/>
</dbReference>
<dbReference type="PANTHER" id="PTHR31559">
    <property type="entry name" value="PYRIDOXAL 5'-PHOSPHATE SYNTHASE SUBUNIT SNO"/>
    <property type="match status" value="1"/>
</dbReference>
<dbReference type="PANTHER" id="PTHR31559:SF0">
    <property type="entry name" value="PYRIDOXAL 5'-PHOSPHATE SYNTHASE SUBUNIT SNO1-RELATED"/>
    <property type="match status" value="1"/>
</dbReference>
<dbReference type="Pfam" id="PF01174">
    <property type="entry name" value="SNO"/>
    <property type="match status" value="1"/>
</dbReference>
<dbReference type="PIRSF" id="PIRSF005639">
    <property type="entry name" value="Glut_amidoT_SNO"/>
    <property type="match status" value="1"/>
</dbReference>
<dbReference type="SUPFAM" id="SSF52317">
    <property type="entry name" value="Class I glutamine amidotransferase-like"/>
    <property type="match status" value="1"/>
</dbReference>
<dbReference type="PROSITE" id="PS01236">
    <property type="entry name" value="PDXT_SNO_1"/>
    <property type="match status" value="1"/>
</dbReference>
<dbReference type="PROSITE" id="PS51130">
    <property type="entry name" value="PDXT_SNO_2"/>
    <property type="match status" value="1"/>
</dbReference>